<comment type="function">
    <text evidence="1">Strong activator of the late viral genes promoters. Enhances the expression of the capsid protein and nuclear shuttle protein. Acts as a suppressor of RNA-mediated gene silencing, also known as post-transcriptional gene silencing (PTGS), a mechanism of plant viral defense that limits the accumulation of viral RNAs. Suppresses the host RNA silencing by inhibiting adenosine kinase 2 (ADK2), a kinase involved in a general methylation pathway. Also suppresses the host basal defense by interacting with and inhibiting SNF1 kinase, a key regulator of cell metabolism implicated in innate antiviral defense. Determines pathogenicity (By similarity).</text>
</comment>
<comment type="subunit">
    <text evidence="1">Monomer. Homodimer. Homooligomer. Self-interaction correlates with nuclear localization and efficient activation of transcription. Monomers suppress local silencing by interacting with and inactivating host adenosine kinase 2 (ADK2) in the cytoplasm. Interacts with and inhibits host SNF1 kinase. Binds to ssDNA (By similarity).</text>
</comment>
<comment type="subcellular location">
    <subcellularLocation>
        <location evidence="1">Host nucleus</location>
    </subcellularLocation>
    <subcellularLocation>
        <location evidence="1">Host cytoplasm</location>
    </subcellularLocation>
    <text evidence="1">The phosphorylated form appears to accumulate almost exclusively in the nucleus, whereas the non-phosphorylated form is found in both nucleus and cytoplasm.</text>
</comment>
<comment type="domain">
    <text evidence="1">The zinc finger and the transactivation region are involved in PTGS suppression.</text>
</comment>
<comment type="PTM">
    <text evidence="1">Phosphorylated.</text>
</comment>
<comment type="similarity">
    <text evidence="3">Belongs to the geminiviridae transcriptional activator protein family.</text>
</comment>
<sequence length="172" mass="19590">MESRFKLKEEYHQSCCAIQVRVPVIKTSSTKRKNQLYTTGPFIMRSSSPSQPPSIKAQHRIAKHKAIRRRRIDLNCGCSIFYHIKCADHGFTHRGEHHCASGREFRFYLGGTKSPLFQDHAGGRSSIHTDKDIPHPNQVQSQPQESTGSPQSIPELPSLDDIDSSFWDDIFK</sequence>
<accession>P0CK37</accession>
<accession>P05174</accession>
<accession>Q67582</accession>
<gene>
    <name type="ORF">AC2</name>
    <name type="ORF">AL2</name>
</gene>
<name>TRAP_BGYMV</name>
<evidence type="ECO:0000250" key="1"/>
<evidence type="ECO:0000256" key="2">
    <source>
        <dbReference type="SAM" id="MobiDB-lite"/>
    </source>
</evidence>
<evidence type="ECO:0000305" key="3"/>
<keyword id="KW-0010">Activator</keyword>
<keyword id="KW-0238">DNA-binding</keyword>
<keyword id="KW-1035">Host cytoplasm</keyword>
<keyword id="KW-1048">Host nucleus</keyword>
<keyword id="KW-0945">Host-virus interaction</keyword>
<keyword id="KW-1090">Inhibition of host innate immune response by virus</keyword>
<keyword id="KW-0479">Metal-binding</keyword>
<keyword id="KW-0597">Phosphoprotein</keyword>
<keyword id="KW-1185">Reference proteome</keyword>
<keyword id="KW-0941">Suppressor of RNA silencing</keyword>
<keyword id="KW-0899">Viral immunoevasion</keyword>
<keyword id="KW-0862">Zinc</keyword>
<keyword id="KW-0863">Zinc-finger</keyword>
<feature type="chain" id="PRO_0000222223" description="Transcriptional activator protein">
    <location>
        <begin position="1"/>
        <end position="172"/>
    </location>
</feature>
<feature type="zinc finger region" evidence="1">
    <location>
        <begin position="76"/>
        <end position="93"/>
    </location>
</feature>
<feature type="region of interest" description="Disordered" evidence="2">
    <location>
        <begin position="119"/>
        <end position="172"/>
    </location>
</feature>
<feature type="region of interest" description="Transactivation" evidence="1">
    <location>
        <begin position="158"/>
        <end position="172"/>
    </location>
</feature>
<feature type="short sequence motif" description="Nuclear localization signal" evidence="1">
    <location>
        <begin position="56"/>
        <end position="71"/>
    </location>
</feature>
<feature type="compositionally biased region" description="Polar residues" evidence="2">
    <location>
        <begin position="137"/>
        <end position="152"/>
    </location>
</feature>
<organism>
    <name type="scientific">Bean golden yellow mosaic virus (isolate Puerto Rico)</name>
    <name type="common">BGYMV</name>
    <name type="synonym">Bean golden mosaic virus (isolate Puerto Rico)</name>
    <dbReference type="NCBI Taxonomy" id="222448"/>
    <lineage>
        <taxon>Viruses</taxon>
        <taxon>Monodnaviria</taxon>
        <taxon>Shotokuvirae</taxon>
        <taxon>Cressdnaviricota</taxon>
        <taxon>Repensiviricetes</taxon>
        <taxon>Geplafuvirales</taxon>
        <taxon>Geminiviridae</taxon>
        <taxon>Begomovirus</taxon>
        <taxon>Bean golden yellow mosaic virus</taxon>
    </lineage>
</organism>
<dbReference type="EMBL" id="M10070">
    <property type="protein sequence ID" value="AAA46321.1"/>
    <property type="molecule type" value="Genomic_DNA"/>
</dbReference>
<dbReference type="Proteomes" id="UP000006572">
    <property type="component" value="Genome"/>
</dbReference>
<dbReference type="GO" id="GO:0030430">
    <property type="term" value="C:host cell cytoplasm"/>
    <property type="evidence" value="ECO:0007669"/>
    <property type="project" value="UniProtKB-SubCell"/>
</dbReference>
<dbReference type="GO" id="GO:0042025">
    <property type="term" value="C:host cell nucleus"/>
    <property type="evidence" value="ECO:0007669"/>
    <property type="project" value="UniProtKB-SubCell"/>
</dbReference>
<dbReference type="GO" id="GO:0019028">
    <property type="term" value="C:viral capsid"/>
    <property type="evidence" value="ECO:0007669"/>
    <property type="project" value="InterPro"/>
</dbReference>
<dbReference type="GO" id="GO:0003677">
    <property type="term" value="F:DNA binding"/>
    <property type="evidence" value="ECO:0007669"/>
    <property type="project" value="UniProtKB-KW"/>
</dbReference>
<dbReference type="GO" id="GO:0005198">
    <property type="term" value="F:structural molecule activity"/>
    <property type="evidence" value="ECO:0007669"/>
    <property type="project" value="InterPro"/>
</dbReference>
<dbReference type="GO" id="GO:0008270">
    <property type="term" value="F:zinc ion binding"/>
    <property type="evidence" value="ECO:0007669"/>
    <property type="project" value="UniProtKB-KW"/>
</dbReference>
<dbReference type="GO" id="GO:0052170">
    <property type="term" value="P:symbiont-mediated suppression of host innate immune response"/>
    <property type="evidence" value="ECO:0007669"/>
    <property type="project" value="UniProtKB-KW"/>
</dbReference>
<dbReference type="InterPro" id="IPR000942">
    <property type="entry name" value="Gemini_AL2"/>
</dbReference>
<dbReference type="Pfam" id="PF01440">
    <property type="entry name" value="Gemini_AL2"/>
    <property type="match status" value="1"/>
</dbReference>
<dbReference type="PRINTS" id="PR00230">
    <property type="entry name" value="GEMCOATAL2"/>
</dbReference>
<proteinExistence type="inferred from homology"/>
<organismHost>
    <name type="scientific">Macroptilium lathyroides</name>
    <dbReference type="NCBI Taxonomy" id="260885"/>
</organismHost>
<organismHost>
    <name type="scientific">Malvastrum coromandelianum</name>
    <dbReference type="NCBI Taxonomy" id="108453"/>
</organismHost>
<organismHost>
    <name type="scientific">Phaseolus lunatus</name>
    <name type="common">Lima bean</name>
    <name type="synonym">Phaseolus limensis</name>
    <dbReference type="NCBI Taxonomy" id="3884"/>
</organismHost>
<organismHost>
    <name type="scientific">Phaseolus vulgaris</name>
    <name type="common">Kidney bean</name>
    <name type="synonym">French bean</name>
    <dbReference type="NCBI Taxonomy" id="3885"/>
</organismHost>
<protein>
    <recommendedName>
        <fullName>Transcriptional activator protein</fullName>
        <shortName>TrAP</shortName>
    </recommendedName>
    <alternativeName>
        <fullName>19.6 kDa protein</fullName>
    </alternativeName>
    <alternativeName>
        <fullName>Protein AC2</fullName>
    </alternativeName>
    <alternativeName>
        <fullName>Protein AL2</fullName>
    </alternativeName>
</protein>
<reference key="1">
    <citation type="journal article" date="1985" name="Proc. Natl. Acad. Sci. U.S.A.">
        <title>Nucleotide sequence of bean golden mosaic virus and a model for gene regulation in geminiviruses.</title>
        <authorList>
            <person name="Howarth A.J."/>
            <person name="Caton J."/>
            <person name="Bossert M."/>
            <person name="Goodman R.M."/>
        </authorList>
    </citation>
    <scope>NUCLEOTIDE SEQUENCE [GENOMIC DNA]</scope>
</reference>